<sequence length="192" mass="20520">MASKGPSASASTENSNAGGPSGSSNGTGESGGQDSTFECNICLDTAKDAVISLCGHLFCWPCLHQWLETRPNRQVCPVCKAGISRDKVIPLYGRGSTGQQDPREKTPPRPQGQRPEPENRGGFQGFGFGDGGFQMSFGIGAFPFGIFATAFNINDGRPPPAVPGTPQYVDEQFLSRLFLFVALVIMFWLLIA</sequence>
<reference key="1">
    <citation type="journal article" date="2005" name="Science">
        <title>The transcriptional landscape of the mammalian genome.</title>
        <authorList>
            <person name="Carninci P."/>
            <person name="Kasukawa T."/>
            <person name="Katayama S."/>
            <person name="Gough J."/>
            <person name="Frith M.C."/>
            <person name="Maeda N."/>
            <person name="Oyama R."/>
            <person name="Ravasi T."/>
            <person name="Lenhard B."/>
            <person name="Wells C."/>
            <person name="Kodzius R."/>
            <person name="Shimokawa K."/>
            <person name="Bajic V.B."/>
            <person name="Brenner S.E."/>
            <person name="Batalov S."/>
            <person name="Forrest A.R."/>
            <person name="Zavolan M."/>
            <person name="Davis M.J."/>
            <person name="Wilming L.G."/>
            <person name="Aidinis V."/>
            <person name="Allen J.E."/>
            <person name="Ambesi-Impiombato A."/>
            <person name="Apweiler R."/>
            <person name="Aturaliya R.N."/>
            <person name="Bailey T.L."/>
            <person name="Bansal M."/>
            <person name="Baxter L."/>
            <person name="Beisel K.W."/>
            <person name="Bersano T."/>
            <person name="Bono H."/>
            <person name="Chalk A.M."/>
            <person name="Chiu K.P."/>
            <person name="Choudhary V."/>
            <person name="Christoffels A."/>
            <person name="Clutterbuck D.R."/>
            <person name="Crowe M.L."/>
            <person name="Dalla E."/>
            <person name="Dalrymple B.P."/>
            <person name="de Bono B."/>
            <person name="Della Gatta G."/>
            <person name="di Bernardo D."/>
            <person name="Down T."/>
            <person name="Engstrom P."/>
            <person name="Fagiolini M."/>
            <person name="Faulkner G."/>
            <person name="Fletcher C.F."/>
            <person name="Fukushima T."/>
            <person name="Furuno M."/>
            <person name="Futaki S."/>
            <person name="Gariboldi M."/>
            <person name="Georgii-Hemming P."/>
            <person name="Gingeras T.R."/>
            <person name="Gojobori T."/>
            <person name="Green R.E."/>
            <person name="Gustincich S."/>
            <person name="Harbers M."/>
            <person name="Hayashi Y."/>
            <person name="Hensch T.K."/>
            <person name="Hirokawa N."/>
            <person name="Hill D."/>
            <person name="Huminiecki L."/>
            <person name="Iacono M."/>
            <person name="Ikeo K."/>
            <person name="Iwama A."/>
            <person name="Ishikawa T."/>
            <person name="Jakt M."/>
            <person name="Kanapin A."/>
            <person name="Katoh M."/>
            <person name="Kawasawa Y."/>
            <person name="Kelso J."/>
            <person name="Kitamura H."/>
            <person name="Kitano H."/>
            <person name="Kollias G."/>
            <person name="Krishnan S.P."/>
            <person name="Kruger A."/>
            <person name="Kummerfeld S.K."/>
            <person name="Kurochkin I.V."/>
            <person name="Lareau L.F."/>
            <person name="Lazarevic D."/>
            <person name="Lipovich L."/>
            <person name="Liu J."/>
            <person name="Liuni S."/>
            <person name="McWilliam S."/>
            <person name="Madan Babu M."/>
            <person name="Madera M."/>
            <person name="Marchionni L."/>
            <person name="Matsuda H."/>
            <person name="Matsuzawa S."/>
            <person name="Miki H."/>
            <person name="Mignone F."/>
            <person name="Miyake S."/>
            <person name="Morris K."/>
            <person name="Mottagui-Tabar S."/>
            <person name="Mulder N."/>
            <person name="Nakano N."/>
            <person name="Nakauchi H."/>
            <person name="Ng P."/>
            <person name="Nilsson R."/>
            <person name="Nishiguchi S."/>
            <person name="Nishikawa S."/>
            <person name="Nori F."/>
            <person name="Ohara O."/>
            <person name="Okazaki Y."/>
            <person name="Orlando V."/>
            <person name="Pang K.C."/>
            <person name="Pavan W.J."/>
            <person name="Pavesi G."/>
            <person name="Pesole G."/>
            <person name="Petrovsky N."/>
            <person name="Piazza S."/>
            <person name="Reed J."/>
            <person name="Reid J.F."/>
            <person name="Ring B.Z."/>
            <person name="Ringwald M."/>
            <person name="Rost B."/>
            <person name="Ruan Y."/>
            <person name="Salzberg S.L."/>
            <person name="Sandelin A."/>
            <person name="Schneider C."/>
            <person name="Schoenbach C."/>
            <person name="Sekiguchi K."/>
            <person name="Semple C.A."/>
            <person name="Seno S."/>
            <person name="Sessa L."/>
            <person name="Sheng Y."/>
            <person name="Shibata Y."/>
            <person name="Shimada H."/>
            <person name="Shimada K."/>
            <person name="Silva D."/>
            <person name="Sinclair B."/>
            <person name="Sperling S."/>
            <person name="Stupka E."/>
            <person name="Sugiura K."/>
            <person name="Sultana R."/>
            <person name="Takenaka Y."/>
            <person name="Taki K."/>
            <person name="Tammoja K."/>
            <person name="Tan S.L."/>
            <person name="Tang S."/>
            <person name="Taylor M.S."/>
            <person name="Tegner J."/>
            <person name="Teichmann S.A."/>
            <person name="Ueda H.R."/>
            <person name="van Nimwegen E."/>
            <person name="Verardo R."/>
            <person name="Wei C.L."/>
            <person name="Yagi K."/>
            <person name="Yamanishi H."/>
            <person name="Zabarovsky E."/>
            <person name="Zhu S."/>
            <person name="Zimmer A."/>
            <person name="Hide W."/>
            <person name="Bult C."/>
            <person name="Grimmond S.M."/>
            <person name="Teasdale R.D."/>
            <person name="Liu E.T."/>
            <person name="Brusic V."/>
            <person name="Quackenbush J."/>
            <person name="Wahlestedt C."/>
            <person name="Mattick J.S."/>
            <person name="Hume D.A."/>
            <person name="Kai C."/>
            <person name="Sasaki D."/>
            <person name="Tomaru Y."/>
            <person name="Fukuda S."/>
            <person name="Kanamori-Katayama M."/>
            <person name="Suzuki M."/>
            <person name="Aoki J."/>
            <person name="Arakawa T."/>
            <person name="Iida J."/>
            <person name="Imamura K."/>
            <person name="Itoh M."/>
            <person name="Kato T."/>
            <person name="Kawaji H."/>
            <person name="Kawagashira N."/>
            <person name="Kawashima T."/>
            <person name="Kojima M."/>
            <person name="Kondo S."/>
            <person name="Konno H."/>
            <person name="Nakano K."/>
            <person name="Ninomiya N."/>
            <person name="Nishio T."/>
            <person name="Okada M."/>
            <person name="Plessy C."/>
            <person name="Shibata K."/>
            <person name="Shiraki T."/>
            <person name="Suzuki S."/>
            <person name="Tagami M."/>
            <person name="Waki K."/>
            <person name="Watahiki A."/>
            <person name="Okamura-Oho Y."/>
            <person name="Suzuki H."/>
            <person name="Kawai J."/>
            <person name="Hayashizaki Y."/>
        </authorList>
    </citation>
    <scope>NUCLEOTIDE SEQUENCE [LARGE SCALE MRNA] (ISOFORMS 1 AND 2)</scope>
    <source>
        <strain>C57BL/6J</strain>
        <tissue>Bone marrow</tissue>
        <tissue>Embryo</tissue>
        <tissue>Eye</tissue>
        <tissue>Heart</tissue>
        <tissue>Lung</tissue>
        <tissue>Placenta</tissue>
        <tissue>Testis</tissue>
    </source>
</reference>
<reference key="2">
    <citation type="journal article" date="2004" name="Genome Res.">
        <title>The status, quality, and expansion of the NIH full-length cDNA project: the Mammalian Gene Collection (MGC).</title>
        <authorList>
            <consortium name="The MGC Project Team"/>
        </authorList>
    </citation>
    <scope>NUCLEOTIDE SEQUENCE [LARGE SCALE MRNA] (ISOFORM 1)</scope>
    <source>
        <strain>129</strain>
        <tissue>Mammary tumor</tissue>
    </source>
</reference>
<reference key="3">
    <citation type="journal article" date="2016" name="Sci. Rep.">
        <title>Genome-wide identification and gene expression profiling of ubiquitin ligases for endoplasmic reticulum protein degradation.</title>
        <authorList>
            <person name="Kaneko M."/>
            <person name="Iwase I."/>
            <person name="Yamasaki Y."/>
            <person name="Takai T."/>
            <person name="Wu Y."/>
            <person name="Kanemoto S."/>
            <person name="Matsuhisa K."/>
            <person name="Asada R."/>
            <person name="Okuma Y."/>
            <person name="Watanabe T."/>
            <person name="Imaizumi K."/>
            <person name="Nomura Y."/>
        </authorList>
    </citation>
    <scope>TISSUE SPECIFICITY</scope>
</reference>
<reference key="4">
    <citation type="journal article" date="2017" name="PLoS Pathog.">
        <title>The E3 ubiquitin ligase RNF185 facilitates the cGAS-mediated innate immune response.</title>
        <authorList>
            <person name="Wang Q."/>
            <person name="Huang L."/>
            <person name="Hong Z."/>
            <person name="Lv Z."/>
            <person name="Mao Z."/>
            <person name="Tang Y."/>
            <person name="Kong X."/>
            <person name="Li S."/>
            <person name="Cui Y."/>
            <person name="Liu H."/>
            <person name="Zhang L."/>
            <person name="Zhang X."/>
            <person name="Jiang L."/>
            <person name="Wang C."/>
            <person name="Zhou Q."/>
        </authorList>
    </citation>
    <scope>FUNCTION</scope>
</reference>
<comment type="function">
    <text evidence="1 6">E3 ubiquitin-protein ligase that regulates selective mitochondrial autophagy by mediating 'Lys-63'-linked polyubiquitination of BNIP1 (By similarity). Acts in the endoplasmic reticulum (ER)-associated degradation (ERAD) pathway, which targets misfolded proteins that accumulate in the endoplasmic reticulum (ER) for ubiquitination and subsequent proteasome-mediated degradation (By similarity). Protects cells from ER stress-induced apoptosis (By similarity). Responsible for the cotranslational ubiquitination and degradation of CFTR in the ERAD pathway (By similarity). Also acts as a regulator of the innate antiviral response by catalyzing 'Lys-27'-linked polyubiquitination of CGAS, thereby promoting CGAS cyclic GMP-AMP synthase activity (PubMed:28273161). Preferentially associates with the E2 enzymes UBE2J1 and UBE2J2 (By similarity).</text>
</comment>
<comment type="catalytic activity">
    <reaction evidence="1">
        <text>S-ubiquitinyl-[E2 ubiquitin-conjugating enzyme]-L-cysteine + [acceptor protein]-L-lysine = [E2 ubiquitin-conjugating enzyme]-L-cysteine + N(6)-ubiquitinyl-[acceptor protein]-L-lysine.</text>
        <dbReference type="EC" id="2.3.2.27"/>
    </reaction>
</comment>
<comment type="pathway">
    <text evidence="1">Protein modification; protein ubiquitination.</text>
</comment>
<comment type="subunit">
    <text evidence="1">Interacts with ATG5 and BNIP1.</text>
</comment>
<comment type="subcellular location">
    <subcellularLocation>
        <location evidence="1">Mitochondrion outer membrane</location>
        <topology evidence="1">Multi-pass membrane protein</topology>
    </subcellularLocation>
    <subcellularLocation>
        <location evidence="1">Endoplasmic reticulum membrane</location>
        <topology evidence="1">Multi-pass membrane protein</topology>
    </subcellularLocation>
</comment>
<comment type="alternative products">
    <event type="alternative splicing"/>
    <isoform>
        <id>Q91YT2-1</id>
        <name>1</name>
        <sequence type="displayed"/>
    </isoform>
    <isoform>
        <id>Q91YT2-2</id>
        <name>2</name>
        <sequence type="described" ref="VSP_020005"/>
    </isoform>
</comment>
<comment type="tissue specificity">
    <text evidence="5">Ubiquitously expressed with high expression in testis.</text>
</comment>
<comment type="domain">
    <text evidence="1">The RING-type zinc finger domain is responsible for E3 ubiquitin ligase activity.</text>
</comment>
<dbReference type="EC" id="2.3.2.27" evidence="1"/>
<dbReference type="EMBL" id="AK034108">
    <property type="protein sequence ID" value="BAC28589.1"/>
    <property type="molecule type" value="mRNA"/>
</dbReference>
<dbReference type="EMBL" id="AK052436">
    <property type="protein sequence ID" value="BAC34989.1"/>
    <property type="molecule type" value="mRNA"/>
</dbReference>
<dbReference type="EMBL" id="AK053358">
    <property type="protein sequence ID" value="BAC35361.1"/>
    <property type="molecule type" value="mRNA"/>
</dbReference>
<dbReference type="EMBL" id="AK075756">
    <property type="protein sequence ID" value="BAC35934.1"/>
    <property type="molecule type" value="mRNA"/>
</dbReference>
<dbReference type="EMBL" id="AK077638">
    <property type="protein sequence ID" value="BAC36918.1"/>
    <property type="molecule type" value="mRNA"/>
</dbReference>
<dbReference type="EMBL" id="AK149640">
    <property type="protein sequence ID" value="BAE29001.1"/>
    <property type="molecule type" value="mRNA"/>
</dbReference>
<dbReference type="EMBL" id="AK165895">
    <property type="protein sequence ID" value="BAE38444.1"/>
    <property type="molecule type" value="mRNA"/>
</dbReference>
<dbReference type="EMBL" id="AK167455">
    <property type="protein sequence ID" value="BAE39541.1"/>
    <property type="molecule type" value="mRNA"/>
</dbReference>
<dbReference type="EMBL" id="AK168904">
    <property type="protein sequence ID" value="BAE40718.1"/>
    <property type="molecule type" value="mRNA"/>
</dbReference>
<dbReference type="EMBL" id="BC014812">
    <property type="protein sequence ID" value="AAH14812.1"/>
    <property type="molecule type" value="mRNA"/>
</dbReference>
<dbReference type="CCDS" id="CCDS24361.1">
    <molecule id="Q91YT2-2"/>
</dbReference>
<dbReference type="CCDS" id="CCDS70127.1">
    <molecule id="Q91YT2-1"/>
</dbReference>
<dbReference type="RefSeq" id="NP_001277401.1">
    <molecule id="Q91YT2-1"/>
    <property type="nucleotide sequence ID" value="NM_001290472.1"/>
</dbReference>
<dbReference type="RefSeq" id="NP_001277402.1">
    <property type="nucleotide sequence ID" value="NM_001290473.1"/>
</dbReference>
<dbReference type="RefSeq" id="NP_663330.2">
    <molecule id="Q91YT2-2"/>
    <property type="nucleotide sequence ID" value="NM_145355.5"/>
</dbReference>
<dbReference type="SMR" id="Q91YT2"/>
<dbReference type="BioGRID" id="228751">
    <property type="interactions" value="3"/>
</dbReference>
<dbReference type="FunCoup" id="Q91YT2">
    <property type="interactions" value="1399"/>
</dbReference>
<dbReference type="STRING" id="10090.ENSMUSP00000067053"/>
<dbReference type="iPTMnet" id="Q91YT2"/>
<dbReference type="PhosphoSitePlus" id="Q91YT2"/>
<dbReference type="SwissPalm" id="Q91YT2"/>
<dbReference type="jPOST" id="Q91YT2"/>
<dbReference type="PaxDb" id="10090-ENSMUSP00000067053"/>
<dbReference type="PeptideAtlas" id="Q91YT2"/>
<dbReference type="ProteomicsDB" id="299922">
    <molecule id="Q91YT2-1"/>
</dbReference>
<dbReference type="ProteomicsDB" id="299923">
    <molecule id="Q91YT2-2"/>
</dbReference>
<dbReference type="Pumba" id="Q91YT2"/>
<dbReference type="Antibodypedia" id="24963">
    <property type="antibodies" value="148 antibodies from 23 providers"/>
</dbReference>
<dbReference type="DNASU" id="193670"/>
<dbReference type="Ensembl" id="ENSMUST00000064364.3">
    <molecule id="Q91YT2-2"/>
    <property type="protein sequence ID" value="ENSMUSP00000067053.3"/>
    <property type="gene ID" value="ENSMUSG00000020448.17"/>
</dbReference>
<dbReference type="Ensembl" id="ENSMUST00000077078.12">
    <molecule id="Q91YT2-1"/>
    <property type="protein sequence ID" value="ENSMUSP00000076333.6"/>
    <property type="gene ID" value="ENSMUSG00000020448.17"/>
</dbReference>
<dbReference type="GeneID" id="193670"/>
<dbReference type="KEGG" id="mmu:193670"/>
<dbReference type="UCSC" id="uc007hsv.2">
    <molecule id="Q91YT2-2"/>
    <property type="organism name" value="mouse"/>
</dbReference>
<dbReference type="UCSC" id="uc007hsw.2">
    <molecule id="Q91YT2-1"/>
    <property type="organism name" value="mouse"/>
</dbReference>
<dbReference type="AGR" id="MGI:1922078"/>
<dbReference type="CTD" id="91445"/>
<dbReference type="MGI" id="MGI:1922078">
    <property type="gene designation" value="Rnf185"/>
</dbReference>
<dbReference type="VEuPathDB" id="HostDB:ENSMUSG00000020448"/>
<dbReference type="eggNOG" id="KOG0823">
    <property type="taxonomic scope" value="Eukaryota"/>
</dbReference>
<dbReference type="GeneTree" id="ENSGT00390000014107"/>
<dbReference type="HOGENOM" id="CLU_055198_2_2_1"/>
<dbReference type="InParanoid" id="Q91YT2"/>
<dbReference type="OrthoDB" id="302966at2759"/>
<dbReference type="PhylomeDB" id="Q91YT2"/>
<dbReference type="TreeFam" id="TF317334"/>
<dbReference type="Reactome" id="R-MMU-382556">
    <property type="pathway name" value="ABC-family proteins mediated transport"/>
</dbReference>
<dbReference type="UniPathway" id="UPA00143"/>
<dbReference type="BioGRID-ORCS" id="193670">
    <property type="hits" value="7 hits in 79 CRISPR screens"/>
</dbReference>
<dbReference type="ChiTaRS" id="Rnf185">
    <property type="organism name" value="mouse"/>
</dbReference>
<dbReference type="PRO" id="PR:Q91YT2"/>
<dbReference type="Proteomes" id="UP000000589">
    <property type="component" value="Chromosome 11"/>
</dbReference>
<dbReference type="RNAct" id="Q91YT2">
    <property type="molecule type" value="protein"/>
</dbReference>
<dbReference type="Bgee" id="ENSMUSG00000020448">
    <property type="expression patterns" value="Expressed in animal zygote and 256 other cell types or tissues"/>
</dbReference>
<dbReference type="GO" id="GO:0005783">
    <property type="term" value="C:endoplasmic reticulum"/>
    <property type="evidence" value="ECO:0000250"/>
    <property type="project" value="UniProtKB"/>
</dbReference>
<dbReference type="GO" id="GO:0005789">
    <property type="term" value="C:endoplasmic reticulum membrane"/>
    <property type="evidence" value="ECO:0007669"/>
    <property type="project" value="UniProtKB-SubCell"/>
</dbReference>
<dbReference type="GO" id="GO:0005741">
    <property type="term" value="C:mitochondrial outer membrane"/>
    <property type="evidence" value="ECO:0007669"/>
    <property type="project" value="UniProtKB-SubCell"/>
</dbReference>
<dbReference type="GO" id="GO:0044877">
    <property type="term" value="F:protein-containing complex binding"/>
    <property type="evidence" value="ECO:0007669"/>
    <property type="project" value="Ensembl"/>
</dbReference>
<dbReference type="GO" id="GO:0043130">
    <property type="term" value="F:ubiquitin binding"/>
    <property type="evidence" value="ECO:0000250"/>
    <property type="project" value="UniProtKB"/>
</dbReference>
<dbReference type="GO" id="GO:0061630">
    <property type="term" value="F:ubiquitin protein ligase activity"/>
    <property type="evidence" value="ECO:0000250"/>
    <property type="project" value="UniProtKB"/>
</dbReference>
<dbReference type="GO" id="GO:0044390">
    <property type="term" value="F:ubiquitin-like protein conjugating enzyme binding"/>
    <property type="evidence" value="ECO:0007669"/>
    <property type="project" value="Ensembl"/>
</dbReference>
<dbReference type="GO" id="GO:0008270">
    <property type="term" value="F:zinc ion binding"/>
    <property type="evidence" value="ECO:0007669"/>
    <property type="project" value="UniProtKB-KW"/>
</dbReference>
<dbReference type="GO" id="GO:0006914">
    <property type="term" value="P:autophagy"/>
    <property type="evidence" value="ECO:0007669"/>
    <property type="project" value="UniProtKB-KW"/>
</dbReference>
<dbReference type="GO" id="GO:0051607">
    <property type="term" value="P:defense response to virus"/>
    <property type="evidence" value="ECO:0000250"/>
    <property type="project" value="UniProtKB"/>
</dbReference>
<dbReference type="GO" id="GO:0036503">
    <property type="term" value="P:ERAD pathway"/>
    <property type="evidence" value="ECO:0007669"/>
    <property type="project" value="Ensembl"/>
</dbReference>
<dbReference type="GO" id="GO:0045087">
    <property type="term" value="P:innate immune response"/>
    <property type="evidence" value="ECO:0007669"/>
    <property type="project" value="UniProtKB-KW"/>
</dbReference>
<dbReference type="GO" id="GO:1904294">
    <property type="term" value="P:positive regulation of ERAD pathway"/>
    <property type="evidence" value="ECO:0000250"/>
    <property type="project" value="UniProtKB"/>
</dbReference>
<dbReference type="GO" id="GO:0060340">
    <property type="term" value="P:positive regulation of type I interferon-mediated signaling pathway"/>
    <property type="evidence" value="ECO:0000250"/>
    <property type="project" value="UniProtKB"/>
</dbReference>
<dbReference type="GO" id="GO:0051865">
    <property type="term" value="P:protein autoubiquitination"/>
    <property type="evidence" value="ECO:0000250"/>
    <property type="project" value="UniProtKB"/>
</dbReference>
<dbReference type="GO" id="GO:0044314">
    <property type="term" value="P:protein K27-linked ubiquitination"/>
    <property type="evidence" value="ECO:0000250"/>
    <property type="project" value="UniProtKB"/>
</dbReference>
<dbReference type="GO" id="GO:0006511">
    <property type="term" value="P:ubiquitin-dependent protein catabolic process"/>
    <property type="evidence" value="ECO:0007669"/>
    <property type="project" value="Ensembl"/>
</dbReference>
<dbReference type="CDD" id="cd16744">
    <property type="entry name" value="RING-HC_RNF185"/>
    <property type="match status" value="1"/>
</dbReference>
<dbReference type="FunFam" id="3.30.40.10:FF:000062">
    <property type="entry name" value="E3 ubiquitin-protein ligase RNF185"/>
    <property type="match status" value="1"/>
</dbReference>
<dbReference type="Gene3D" id="3.30.40.10">
    <property type="entry name" value="Zinc/RING finger domain, C3HC4 (zinc finger)"/>
    <property type="match status" value="1"/>
</dbReference>
<dbReference type="InterPro" id="IPR045103">
    <property type="entry name" value="RNF5/RNF185-like"/>
</dbReference>
<dbReference type="InterPro" id="IPR018957">
    <property type="entry name" value="Znf_C3HC4_RING-type"/>
</dbReference>
<dbReference type="InterPro" id="IPR001841">
    <property type="entry name" value="Znf_RING"/>
</dbReference>
<dbReference type="InterPro" id="IPR013083">
    <property type="entry name" value="Znf_RING/FYVE/PHD"/>
</dbReference>
<dbReference type="InterPro" id="IPR017907">
    <property type="entry name" value="Znf_RING_CS"/>
</dbReference>
<dbReference type="PANTHER" id="PTHR12313">
    <property type="entry name" value="E3 UBIQUITIN-PROTEIN LIGASE RNF5-RELATED"/>
    <property type="match status" value="1"/>
</dbReference>
<dbReference type="Pfam" id="PF00097">
    <property type="entry name" value="zf-C3HC4"/>
    <property type="match status" value="1"/>
</dbReference>
<dbReference type="SMART" id="SM00184">
    <property type="entry name" value="RING"/>
    <property type="match status" value="1"/>
</dbReference>
<dbReference type="SUPFAM" id="SSF57850">
    <property type="entry name" value="RING/U-box"/>
    <property type="match status" value="1"/>
</dbReference>
<dbReference type="PROSITE" id="PS00518">
    <property type="entry name" value="ZF_RING_1"/>
    <property type="match status" value="1"/>
</dbReference>
<dbReference type="PROSITE" id="PS50089">
    <property type="entry name" value="ZF_RING_2"/>
    <property type="match status" value="1"/>
</dbReference>
<accession>Q91YT2</accession>
<accession>Q6ZWS3</accession>
<gene>
    <name type="primary">Rnf185</name>
</gene>
<proteinExistence type="evidence at transcript level"/>
<protein>
    <recommendedName>
        <fullName>E3 ubiquitin-protein ligase RNF185</fullName>
        <ecNumber evidence="1">2.3.2.27</ecNumber>
    </recommendedName>
    <alternativeName>
        <fullName>RING finger protein 185</fullName>
    </alternativeName>
</protein>
<name>RN185_MOUSE</name>
<evidence type="ECO:0000250" key="1">
    <source>
        <dbReference type="UniProtKB" id="Q96GF1"/>
    </source>
</evidence>
<evidence type="ECO:0000255" key="2"/>
<evidence type="ECO:0000255" key="3">
    <source>
        <dbReference type="PROSITE-ProRule" id="PRU00175"/>
    </source>
</evidence>
<evidence type="ECO:0000256" key="4">
    <source>
        <dbReference type="SAM" id="MobiDB-lite"/>
    </source>
</evidence>
<evidence type="ECO:0000269" key="5">
    <source>
    </source>
</evidence>
<evidence type="ECO:0000269" key="6">
    <source>
    </source>
</evidence>
<evidence type="ECO:0000303" key="7">
    <source>
    </source>
</evidence>
<organism>
    <name type="scientific">Mus musculus</name>
    <name type="common">Mouse</name>
    <dbReference type="NCBI Taxonomy" id="10090"/>
    <lineage>
        <taxon>Eukaryota</taxon>
        <taxon>Metazoa</taxon>
        <taxon>Chordata</taxon>
        <taxon>Craniata</taxon>
        <taxon>Vertebrata</taxon>
        <taxon>Euteleostomi</taxon>
        <taxon>Mammalia</taxon>
        <taxon>Eutheria</taxon>
        <taxon>Euarchontoglires</taxon>
        <taxon>Glires</taxon>
        <taxon>Rodentia</taxon>
        <taxon>Myomorpha</taxon>
        <taxon>Muroidea</taxon>
        <taxon>Muridae</taxon>
        <taxon>Murinae</taxon>
        <taxon>Mus</taxon>
        <taxon>Mus</taxon>
    </lineage>
</organism>
<feature type="chain" id="PRO_0000247521" description="E3 ubiquitin-protein ligase RNF185">
    <location>
        <begin position="1"/>
        <end position="192"/>
    </location>
</feature>
<feature type="topological domain" description="Cytoplasmic">
    <location>
        <begin position="1"/>
        <end position="130"/>
    </location>
</feature>
<feature type="transmembrane region" description="Helical" evidence="2">
    <location>
        <begin position="131"/>
        <end position="151"/>
    </location>
</feature>
<feature type="topological domain" description="Mitochondrial intermembrane">
    <location>
        <begin position="152"/>
        <end position="171"/>
    </location>
</feature>
<feature type="transmembrane region" description="Helical" evidence="2">
    <location>
        <begin position="172"/>
        <end position="192"/>
    </location>
</feature>
<feature type="zinc finger region" description="RING-type" evidence="3">
    <location>
        <begin position="39"/>
        <end position="80"/>
    </location>
</feature>
<feature type="region of interest" description="Disordered" evidence="4">
    <location>
        <begin position="1"/>
        <end position="30"/>
    </location>
</feature>
<feature type="region of interest" description="Required for ubiquitin ligase activity and protection against ER stress-induced cell death" evidence="1">
    <location>
        <begin position="29"/>
        <end position="80"/>
    </location>
</feature>
<feature type="region of interest" description="Disordered" evidence="4">
    <location>
        <begin position="90"/>
        <end position="123"/>
    </location>
</feature>
<feature type="compositionally biased region" description="Polar residues" evidence="4">
    <location>
        <begin position="1"/>
        <end position="13"/>
    </location>
</feature>
<feature type="compositionally biased region" description="Low complexity" evidence="4">
    <location>
        <begin position="14"/>
        <end position="27"/>
    </location>
</feature>
<feature type="splice variant" id="VSP_020005" description="In isoform 2." evidence="7">
    <original>M</original>
    <variation>MCILLCPHMFCRPINQRQADWDCLENLPWKLCWQAAM</variation>
    <location>
        <position position="1"/>
    </location>
</feature>
<keyword id="KW-0025">Alternative splicing</keyword>
<keyword id="KW-0072">Autophagy</keyword>
<keyword id="KW-0256">Endoplasmic reticulum</keyword>
<keyword id="KW-0391">Immunity</keyword>
<keyword id="KW-0399">Innate immunity</keyword>
<keyword id="KW-0472">Membrane</keyword>
<keyword id="KW-0479">Metal-binding</keyword>
<keyword id="KW-0496">Mitochondrion</keyword>
<keyword id="KW-1000">Mitochondrion outer membrane</keyword>
<keyword id="KW-1185">Reference proteome</keyword>
<keyword id="KW-0808">Transferase</keyword>
<keyword id="KW-0812">Transmembrane</keyword>
<keyword id="KW-1133">Transmembrane helix</keyword>
<keyword id="KW-0833">Ubl conjugation pathway</keyword>
<keyword id="KW-0862">Zinc</keyword>
<keyword id="KW-0863">Zinc-finger</keyword>